<reference key="1">
    <citation type="submission" date="2002-12" db="EMBL/GenBank/DDBJ databases">
        <title>Complete genome sequence of Vibrio vulnificus CMCP6.</title>
        <authorList>
            <person name="Rhee J.H."/>
            <person name="Kim S.Y."/>
            <person name="Chung S.S."/>
            <person name="Kim J.J."/>
            <person name="Moon Y.H."/>
            <person name="Jeong H."/>
            <person name="Choy H.E."/>
        </authorList>
    </citation>
    <scope>NUCLEOTIDE SEQUENCE [LARGE SCALE GENOMIC DNA]</scope>
    <source>
        <strain>CMCP6</strain>
    </source>
</reference>
<proteinExistence type="inferred from homology"/>
<keyword id="KW-0349">Heme</keyword>
<keyword id="KW-0376">Hydrogen peroxide</keyword>
<keyword id="KW-0408">Iron</keyword>
<keyword id="KW-0479">Metal-binding</keyword>
<keyword id="KW-0560">Oxidoreductase</keyword>
<keyword id="KW-0574">Periplasm</keyword>
<keyword id="KW-0575">Peroxidase</keyword>
<keyword id="KW-0732">Signal</keyword>
<protein>
    <recommendedName>
        <fullName>Catalase</fullName>
        <ecNumber>1.11.1.6</ecNumber>
    </recommendedName>
</protein>
<feature type="signal peptide" evidence="2">
    <location>
        <begin position="1"/>
        <end position="21"/>
    </location>
</feature>
<feature type="chain" id="PRO_0000004691" description="Catalase">
    <location>
        <begin position="22"/>
        <end position="508"/>
    </location>
</feature>
<feature type="region of interest" description="Disordered" evidence="4">
    <location>
        <begin position="373"/>
        <end position="396"/>
    </location>
</feature>
<feature type="compositionally biased region" description="Polar residues" evidence="4">
    <location>
        <begin position="373"/>
        <end position="392"/>
    </location>
</feature>
<feature type="active site" evidence="3">
    <location>
        <position position="72"/>
    </location>
</feature>
<feature type="active site" evidence="3">
    <location>
        <position position="145"/>
    </location>
</feature>
<feature type="binding site" description="axial binding residue" evidence="1">
    <location>
        <position position="353"/>
    </location>
    <ligand>
        <name>heme</name>
        <dbReference type="ChEBI" id="CHEBI:30413"/>
    </ligand>
    <ligandPart>
        <name>Fe</name>
        <dbReference type="ChEBI" id="CHEBI:18248"/>
    </ligandPart>
</feature>
<comment type="function">
    <text evidence="1">Decomposes hydrogen peroxide into water and oxygen; serves to protect cells from the toxic effects of hydrogen peroxide.</text>
</comment>
<comment type="catalytic activity">
    <reaction evidence="3">
        <text>2 H2O2 = O2 + 2 H2O</text>
        <dbReference type="Rhea" id="RHEA:20309"/>
        <dbReference type="ChEBI" id="CHEBI:15377"/>
        <dbReference type="ChEBI" id="CHEBI:15379"/>
        <dbReference type="ChEBI" id="CHEBI:16240"/>
        <dbReference type="EC" id="1.11.1.6"/>
    </reaction>
</comment>
<comment type="cofactor">
    <cofactor evidence="1">
        <name>heme</name>
        <dbReference type="ChEBI" id="CHEBI:30413"/>
    </cofactor>
</comment>
<comment type="subcellular location">
    <subcellularLocation>
        <location evidence="5">Periplasm</location>
    </subcellularLocation>
</comment>
<comment type="similarity">
    <text evidence="5">Belongs to the catalase family.</text>
</comment>
<evidence type="ECO:0000250" key="1"/>
<evidence type="ECO:0000255" key="2"/>
<evidence type="ECO:0000255" key="3">
    <source>
        <dbReference type="PROSITE-ProRule" id="PRU10013"/>
    </source>
</evidence>
<evidence type="ECO:0000256" key="4">
    <source>
        <dbReference type="SAM" id="MobiDB-lite"/>
    </source>
</evidence>
<evidence type="ECO:0000305" key="5"/>
<accession>Q8D452</accession>
<sequence length="508" mass="56664">MHMSKSFLLISMGLASISVHAQTLTRDNGAPVGDNQNSITAGENGSVLLQDVHLIQKLQRFARERIPERVVHARGTGAHGEFVVSGDFSDLTLSSPFAQSGKVTPVFVRFSTVIHSKGSPETLRDPRGFATKFYTDQGNWDLVGNNLPVFFIRDSIKFPDMVHSLKPSPVTNLQDPNRFFDFFSSQPSATNMLTWVYTNLGTPASYRTMDGFGVHAYKWINRKGEVNYVKFHWKSQQGVKSLRPAEVTKVQGEDFNHLTNDLYTQINAGNFPKWDLYVKVLSPKALSKLDYNGLDATKVWLDVPEKKVGTMTLNRVPDNFFLETEQSAFAPSNIIPGIEPSEDRLLQGRLFAYADTQLYRLGANLFQLPVNSPKSPVANHNQDGPSNNSTGLGNVDSLDVNYEPSRLVNLTVDKQARAVETPLSGHVQQQAIRNPRDFFQAGVLYRSLSEQDKADLIHNLSGDLNKVNDAEVKAIMVSYFYRADKEYGTRLAKATDVNLKQVTKLASM</sequence>
<name>CATA_VIBVU</name>
<organism>
    <name type="scientific">Vibrio vulnificus (strain CMCP6)</name>
    <dbReference type="NCBI Taxonomy" id="216895"/>
    <lineage>
        <taxon>Bacteria</taxon>
        <taxon>Pseudomonadati</taxon>
        <taxon>Pseudomonadota</taxon>
        <taxon>Gammaproteobacteria</taxon>
        <taxon>Vibrionales</taxon>
        <taxon>Vibrionaceae</taxon>
        <taxon>Vibrio</taxon>
    </lineage>
</organism>
<gene>
    <name type="ordered locus">VV2_1473</name>
</gene>
<dbReference type="EC" id="1.11.1.6"/>
<dbReference type="EMBL" id="AE016796">
    <property type="protein sequence ID" value="AAO08343.2"/>
    <property type="molecule type" value="Genomic_DNA"/>
</dbReference>
<dbReference type="RefSeq" id="WP_011082332.1">
    <property type="nucleotide sequence ID" value="NC_004460.2"/>
</dbReference>
<dbReference type="SMR" id="Q8D452"/>
<dbReference type="KEGG" id="vvu:VV2_1473"/>
<dbReference type="HOGENOM" id="CLU_010645_4_0_6"/>
<dbReference type="Proteomes" id="UP000002275">
    <property type="component" value="Chromosome 2"/>
</dbReference>
<dbReference type="GO" id="GO:0005737">
    <property type="term" value="C:cytoplasm"/>
    <property type="evidence" value="ECO:0007669"/>
    <property type="project" value="TreeGrafter"/>
</dbReference>
<dbReference type="GO" id="GO:0042597">
    <property type="term" value="C:periplasmic space"/>
    <property type="evidence" value="ECO:0007669"/>
    <property type="project" value="UniProtKB-SubCell"/>
</dbReference>
<dbReference type="GO" id="GO:0004096">
    <property type="term" value="F:catalase activity"/>
    <property type="evidence" value="ECO:0007669"/>
    <property type="project" value="UniProtKB-EC"/>
</dbReference>
<dbReference type="GO" id="GO:0020037">
    <property type="term" value="F:heme binding"/>
    <property type="evidence" value="ECO:0007669"/>
    <property type="project" value="InterPro"/>
</dbReference>
<dbReference type="GO" id="GO:0046872">
    <property type="term" value="F:metal ion binding"/>
    <property type="evidence" value="ECO:0007669"/>
    <property type="project" value="UniProtKB-KW"/>
</dbReference>
<dbReference type="GO" id="GO:0042744">
    <property type="term" value="P:hydrogen peroxide catabolic process"/>
    <property type="evidence" value="ECO:0007669"/>
    <property type="project" value="UniProtKB-KW"/>
</dbReference>
<dbReference type="GO" id="GO:0042542">
    <property type="term" value="P:response to hydrogen peroxide"/>
    <property type="evidence" value="ECO:0007669"/>
    <property type="project" value="TreeGrafter"/>
</dbReference>
<dbReference type="CDD" id="cd08154">
    <property type="entry name" value="catalase_clade_1"/>
    <property type="match status" value="1"/>
</dbReference>
<dbReference type="Gene3D" id="2.40.180.10">
    <property type="entry name" value="Catalase core domain"/>
    <property type="match status" value="1"/>
</dbReference>
<dbReference type="InterPro" id="IPR018028">
    <property type="entry name" value="Catalase"/>
</dbReference>
<dbReference type="InterPro" id="IPR024708">
    <property type="entry name" value="Catalase_AS"/>
</dbReference>
<dbReference type="InterPro" id="IPR024711">
    <property type="entry name" value="Catalase_clade1/3"/>
</dbReference>
<dbReference type="InterPro" id="IPR011614">
    <property type="entry name" value="Catalase_core"/>
</dbReference>
<dbReference type="InterPro" id="IPR002226">
    <property type="entry name" value="Catalase_haem_BS"/>
</dbReference>
<dbReference type="InterPro" id="IPR010582">
    <property type="entry name" value="Catalase_immune_responsive"/>
</dbReference>
<dbReference type="InterPro" id="IPR020835">
    <property type="entry name" value="Catalase_sf"/>
</dbReference>
<dbReference type="PANTHER" id="PTHR11465">
    <property type="entry name" value="CATALASE"/>
    <property type="match status" value="1"/>
</dbReference>
<dbReference type="PANTHER" id="PTHR11465:SF23">
    <property type="entry name" value="CATALASE-2"/>
    <property type="match status" value="1"/>
</dbReference>
<dbReference type="Pfam" id="PF00199">
    <property type="entry name" value="Catalase"/>
    <property type="match status" value="1"/>
</dbReference>
<dbReference type="Pfam" id="PF06628">
    <property type="entry name" value="Catalase-rel"/>
    <property type="match status" value="1"/>
</dbReference>
<dbReference type="PIRSF" id="PIRSF038928">
    <property type="entry name" value="Catalase_clade1-3"/>
    <property type="match status" value="1"/>
</dbReference>
<dbReference type="PRINTS" id="PR00067">
    <property type="entry name" value="CATALASE"/>
</dbReference>
<dbReference type="SMART" id="SM01060">
    <property type="entry name" value="Catalase"/>
    <property type="match status" value="1"/>
</dbReference>
<dbReference type="SUPFAM" id="SSF56634">
    <property type="entry name" value="Heme-dependent catalase-like"/>
    <property type="match status" value="1"/>
</dbReference>
<dbReference type="PROSITE" id="PS00437">
    <property type="entry name" value="CATALASE_1"/>
    <property type="match status" value="1"/>
</dbReference>
<dbReference type="PROSITE" id="PS00438">
    <property type="entry name" value="CATALASE_2"/>
    <property type="match status" value="1"/>
</dbReference>
<dbReference type="PROSITE" id="PS51402">
    <property type="entry name" value="CATALASE_3"/>
    <property type="match status" value="1"/>
</dbReference>